<organism>
    <name type="scientific">Frankia alni (strain DSM 45986 / CECT 9034 / ACN14a)</name>
    <dbReference type="NCBI Taxonomy" id="326424"/>
    <lineage>
        <taxon>Bacteria</taxon>
        <taxon>Bacillati</taxon>
        <taxon>Actinomycetota</taxon>
        <taxon>Actinomycetes</taxon>
        <taxon>Frankiales</taxon>
        <taxon>Frankiaceae</taxon>
        <taxon>Frankia</taxon>
    </lineage>
</organism>
<gene>
    <name evidence="1" type="primary">rpsR2</name>
    <name type="ordered locus">FRAAL6851</name>
</gene>
<comment type="function">
    <text evidence="1">Binds as a heterodimer with protein bS6 to the central domain of the 16S rRNA, where it helps stabilize the platform of the 30S subunit.</text>
</comment>
<comment type="subunit">
    <text evidence="1">Part of the 30S ribosomal subunit. Forms a tight heterodimer with protein bS6.</text>
</comment>
<comment type="similarity">
    <text evidence="1">Belongs to the bacterial ribosomal protein bS18 family.</text>
</comment>
<keyword id="KW-1185">Reference proteome</keyword>
<keyword id="KW-0687">Ribonucleoprotein</keyword>
<keyword id="KW-0689">Ribosomal protein</keyword>
<keyword id="KW-0694">RNA-binding</keyword>
<keyword id="KW-0699">rRNA-binding</keyword>
<feature type="chain" id="PRO_0000345477" description="Small ribosomal subunit protein bS18B">
    <location>
        <begin position="1"/>
        <end position="73"/>
    </location>
</feature>
<accession>Q0RAR6</accession>
<reference key="1">
    <citation type="journal article" date="2007" name="Genome Res.">
        <title>Genome characteristics of facultatively symbiotic Frankia sp. strains reflect host range and host plant biogeography.</title>
        <authorList>
            <person name="Normand P."/>
            <person name="Lapierre P."/>
            <person name="Tisa L.S."/>
            <person name="Gogarten J.P."/>
            <person name="Alloisio N."/>
            <person name="Bagnarol E."/>
            <person name="Bassi C.A."/>
            <person name="Berry A.M."/>
            <person name="Bickhart D.M."/>
            <person name="Choisne N."/>
            <person name="Couloux A."/>
            <person name="Cournoyer B."/>
            <person name="Cruveiller S."/>
            <person name="Daubin V."/>
            <person name="Demange N."/>
            <person name="Francino M.P."/>
            <person name="Goltsman E."/>
            <person name="Huang Y."/>
            <person name="Kopp O.R."/>
            <person name="Labarre L."/>
            <person name="Lapidus A."/>
            <person name="Lavire C."/>
            <person name="Marechal J."/>
            <person name="Martinez M."/>
            <person name="Mastronunzio J.E."/>
            <person name="Mullin B.C."/>
            <person name="Niemann J."/>
            <person name="Pujic P."/>
            <person name="Rawnsley T."/>
            <person name="Rouy Z."/>
            <person name="Schenowitz C."/>
            <person name="Sellstedt A."/>
            <person name="Tavares F."/>
            <person name="Tomkins J.P."/>
            <person name="Vallenet D."/>
            <person name="Valverde C."/>
            <person name="Wall L.G."/>
            <person name="Wang Y."/>
            <person name="Medigue C."/>
            <person name="Benson D.R."/>
        </authorList>
    </citation>
    <scope>NUCLEOTIDE SEQUENCE [LARGE SCALE GENOMIC DNA]</scope>
    <source>
        <strain>DSM 45986 / CECT 9034 / ACN14a</strain>
    </source>
</reference>
<dbReference type="EMBL" id="CT573213">
    <property type="protein sequence ID" value="CAJ65474.1"/>
    <property type="molecule type" value="Genomic_DNA"/>
</dbReference>
<dbReference type="SMR" id="Q0RAR6"/>
<dbReference type="STRING" id="326424.FRAAL6851"/>
<dbReference type="KEGG" id="fal:FRAAL6851"/>
<dbReference type="eggNOG" id="COG0238">
    <property type="taxonomic scope" value="Bacteria"/>
</dbReference>
<dbReference type="HOGENOM" id="CLU_148710_2_2_11"/>
<dbReference type="Proteomes" id="UP000000657">
    <property type="component" value="Chromosome"/>
</dbReference>
<dbReference type="GO" id="GO:0022627">
    <property type="term" value="C:cytosolic small ribosomal subunit"/>
    <property type="evidence" value="ECO:0007669"/>
    <property type="project" value="TreeGrafter"/>
</dbReference>
<dbReference type="GO" id="GO:0070181">
    <property type="term" value="F:small ribosomal subunit rRNA binding"/>
    <property type="evidence" value="ECO:0007669"/>
    <property type="project" value="TreeGrafter"/>
</dbReference>
<dbReference type="GO" id="GO:0003735">
    <property type="term" value="F:structural constituent of ribosome"/>
    <property type="evidence" value="ECO:0007669"/>
    <property type="project" value="InterPro"/>
</dbReference>
<dbReference type="GO" id="GO:0006412">
    <property type="term" value="P:translation"/>
    <property type="evidence" value="ECO:0007669"/>
    <property type="project" value="UniProtKB-UniRule"/>
</dbReference>
<dbReference type="FunFam" id="4.10.640.10:FF:000004">
    <property type="entry name" value="30S ribosomal protein S18"/>
    <property type="match status" value="1"/>
</dbReference>
<dbReference type="Gene3D" id="4.10.640.10">
    <property type="entry name" value="Ribosomal protein S18"/>
    <property type="match status" value="1"/>
</dbReference>
<dbReference type="HAMAP" id="MF_00270">
    <property type="entry name" value="Ribosomal_bS18"/>
    <property type="match status" value="1"/>
</dbReference>
<dbReference type="InterPro" id="IPR001648">
    <property type="entry name" value="Ribosomal_bS18"/>
</dbReference>
<dbReference type="InterPro" id="IPR018275">
    <property type="entry name" value="Ribosomal_bS18_CS"/>
</dbReference>
<dbReference type="InterPro" id="IPR036870">
    <property type="entry name" value="Ribosomal_bS18_sf"/>
</dbReference>
<dbReference type="NCBIfam" id="TIGR00165">
    <property type="entry name" value="S18"/>
    <property type="match status" value="1"/>
</dbReference>
<dbReference type="PANTHER" id="PTHR13479">
    <property type="entry name" value="30S RIBOSOMAL PROTEIN S18"/>
    <property type="match status" value="1"/>
</dbReference>
<dbReference type="PANTHER" id="PTHR13479:SF62">
    <property type="entry name" value="SMALL RIBOSOMAL SUBUNIT PROTEIN BS18A"/>
    <property type="match status" value="1"/>
</dbReference>
<dbReference type="Pfam" id="PF01084">
    <property type="entry name" value="Ribosomal_S18"/>
    <property type="match status" value="1"/>
</dbReference>
<dbReference type="PRINTS" id="PR00974">
    <property type="entry name" value="RIBOSOMALS18"/>
</dbReference>
<dbReference type="SUPFAM" id="SSF46911">
    <property type="entry name" value="Ribosomal protein S18"/>
    <property type="match status" value="1"/>
</dbReference>
<dbReference type="PROSITE" id="PS00057">
    <property type="entry name" value="RIBOSOMAL_S18"/>
    <property type="match status" value="1"/>
</dbReference>
<sequence length="73" mass="8464">MRKPKKKVCVFCKDKVEYIDFKDTSLLRKYISDRGKIRARRVSGNCSQHQRDVATAVKNSREMALLPYTASAR</sequence>
<proteinExistence type="inferred from homology"/>
<name>RS182_FRAAA</name>
<protein>
    <recommendedName>
        <fullName evidence="1">Small ribosomal subunit protein bS18B</fullName>
    </recommendedName>
    <alternativeName>
        <fullName evidence="2">30S ribosomal protein S18 2</fullName>
    </alternativeName>
</protein>
<evidence type="ECO:0000255" key="1">
    <source>
        <dbReference type="HAMAP-Rule" id="MF_00270"/>
    </source>
</evidence>
<evidence type="ECO:0000305" key="2"/>